<gene>
    <name evidence="4" type="primary">vuuB</name>
    <name evidence="3" type="synonym">viuB</name>
    <name evidence="5" type="ordered locus">VV2_0837</name>
</gene>
<proteinExistence type="inferred from homology"/>
<comment type="function">
    <text evidence="1 4">Ferric-siderophore reductase involved in iron removal from the siderophores after their transport into the cell (Probable). Acts as a major ferric-vulnibactin reductase catalyzing the reduction of Fe(3+)-vulnibactin, a catecholate siderophore synthesized by V.vulnificus (By similarity).</text>
</comment>
<comment type="catalytic activity">
    <reaction evidence="1">
        <text>2 a Fe(II)-siderophore + NAD(+) + H(+) = 2 a Fe(III)-siderophore + NADH</text>
        <dbReference type="Rhea" id="RHEA:15061"/>
        <dbReference type="Rhea" id="RHEA-COMP:11342"/>
        <dbReference type="Rhea" id="RHEA-COMP:11344"/>
        <dbReference type="ChEBI" id="CHEBI:15378"/>
        <dbReference type="ChEBI" id="CHEBI:29033"/>
        <dbReference type="ChEBI" id="CHEBI:29034"/>
        <dbReference type="ChEBI" id="CHEBI:57540"/>
        <dbReference type="ChEBI" id="CHEBI:57945"/>
        <dbReference type="EC" id="1.16.1.7"/>
    </reaction>
    <physiologicalReaction direction="right-to-left" evidence="1">
        <dbReference type="Rhea" id="RHEA:15063"/>
    </physiologicalReaction>
</comment>
<comment type="cofactor">
    <cofactor evidence="1">
        <name>FAD</name>
        <dbReference type="ChEBI" id="CHEBI:57692"/>
    </cofactor>
</comment>
<comment type="subunit">
    <text evidence="1">Monomer.</text>
</comment>
<comment type="subcellular location">
    <subcellularLocation>
        <location evidence="1">Cytoplasm</location>
    </subcellularLocation>
</comment>
<comment type="similarity">
    <text evidence="4">Belongs to the SIP oxidoreductase family.</text>
</comment>
<dbReference type="EC" id="1.16.1.7" evidence="1"/>
<dbReference type="EMBL" id="U32676">
    <property type="protein sequence ID" value="AAB18151.1"/>
    <property type="molecule type" value="Genomic_DNA"/>
</dbReference>
<dbReference type="EMBL" id="AE016796">
    <property type="protein sequence ID" value="AAO07760.1"/>
    <property type="molecule type" value="Genomic_DNA"/>
</dbReference>
<dbReference type="RefSeq" id="WP_011081754.1">
    <property type="nucleotide sequence ID" value="NC_004460.2"/>
</dbReference>
<dbReference type="SMR" id="Q56743"/>
<dbReference type="KEGG" id="vvu:VV2_0837"/>
<dbReference type="HOGENOM" id="CLU_040923_3_1_6"/>
<dbReference type="Proteomes" id="UP000002275">
    <property type="component" value="Chromosome 2"/>
</dbReference>
<dbReference type="GO" id="GO:0005737">
    <property type="term" value="C:cytoplasm"/>
    <property type="evidence" value="ECO:0000250"/>
    <property type="project" value="UniProtKB"/>
</dbReference>
<dbReference type="GO" id="GO:0140618">
    <property type="term" value="F:ferric-chelate reductase (NADH) activity"/>
    <property type="evidence" value="ECO:0000250"/>
    <property type="project" value="UniProtKB"/>
</dbReference>
<dbReference type="GO" id="GO:0019536">
    <property type="term" value="P:vibriobactin metabolic process"/>
    <property type="evidence" value="ECO:0000250"/>
    <property type="project" value="UniProtKB"/>
</dbReference>
<dbReference type="CDD" id="cd06193">
    <property type="entry name" value="siderophore_interacting"/>
    <property type="match status" value="1"/>
</dbReference>
<dbReference type="FunFam" id="3.40.50.80:FF:000038">
    <property type="entry name" value="Vibriobactin utilization protein ViuB"/>
    <property type="match status" value="1"/>
</dbReference>
<dbReference type="Gene3D" id="3.40.50.80">
    <property type="entry name" value="Nucleotide-binding domain of ferredoxin-NADP reductase (FNR) module"/>
    <property type="match status" value="1"/>
</dbReference>
<dbReference type="Gene3D" id="2.40.30.10">
    <property type="entry name" value="Translation factors"/>
    <property type="match status" value="1"/>
</dbReference>
<dbReference type="InterPro" id="IPR013113">
    <property type="entry name" value="FAD-bd_9_SIP"/>
</dbReference>
<dbReference type="InterPro" id="IPR017927">
    <property type="entry name" value="FAD-bd_FR_type"/>
</dbReference>
<dbReference type="InterPro" id="IPR039261">
    <property type="entry name" value="FNR_nucleotide-bd"/>
</dbReference>
<dbReference type="InterPro" id="IPR017938">
    <property type="entry name" value="Riboflavin_synthase-like_b-brl"/>
</dbReference>
<dbReference type="InterPro" id="IPR007037">
    <property type="entry name" value="SIP_C"/>
</dbReference>
<dbReference type="InterPro" id="IPR039374">
    <property type="entry name" value="SIP_fam"/>
</dbReference>
<dbReference type="PANTHER" id="PTHR30157">
    <property type="entry name" value="FERRIC REDUCTASE, NADPH-DEPENDENT"/>
    <property type="match status" value="1"/>
</dbReference>
<dbReference type="PANTHER" id="PTHR30157:SF0">
    <property type="entry name" value="NADPH-DEPENDENT FERRIC-CHELATE REDUCTASE"/>
    <property type="match status" value="1"/>
</dbReference>
<dbReference type="Pfam" id="PF08021">
    <property type="entry name" value="FAD_binding_9"/>
    <property type="match status" value="1"/>
</dbReference>
<dbReference type="Pfam" id="PF04954">
    <property type="entry name" value="SIP"/>
    <property type="match status" value="1"/>
</dbReference>
<dbReference type="SUPFAM" id="SSF63380">
    <property type="entry name" value="Riboflavin synthase domain-like"/>
    <property type="match status" value="1"/>
</dbReference>
<dbReference type="PROSITE" id="PS51384">
    <property type="entry name" value="FAD_FR"/>
    <property type="match status" value="1"/>
</dbReference>
<reference key="1">
    <citation type="journal article" date="1996" name="Infect. Immun.">
        <title>Role of catechol siderophore synthesis in Vibrio vulnificus virulence.</title>
        <authorList>
            <person name="Litwin C.M."/>
            <person name="Rayback T.W."/>
            <person name="Skinner J."/>
        </authorList>
    </citation>
    <scope>NUCLEOTIDE SEQUENCE [GENOMIC DNA]</scope>
    <source>
        <strain>MO6-24</strain>
    </source>
</reference>
<reference key="2">
    <citation type="submission" date="2002-12" db="EMBL/GenBank/DDBJ databases">
        <title>Complete genome sequence of Vibrio vulnificus CMCP6.</title>
        <authorList>
            <person name="Rhee J.H."/>
            <person name="Kim S.Y."/>
            <person name="Chung S.S."/>
            <person name="Kim J.J."/>
            <person name="Moon Y.H."/>
            <person name="Jeong H."/>
            <person name="Choy H.E."/>
        </authorList>
    </citation>
    <scope>NUCLEOTIDE SEQUENCE [LARGE SCALE GENOMIC DNA]</scope>
    <source>
        <strain>CMCP6</strain>
    </source>
</reference>
<accession>Q56743</accession>
<name>VUUB_VIBVU</name>
<feature type="chain" id="PRO_0000065872" description="Ferric vulnibactin reductase VuuB">
    <location>
        <begin position="1"/>
        <end position="271"/>
    </location>
</feature>
<feature type="domain" description="FAD-binding FR-type" evidence="2">
    <location>
        <begin position="8"/>
        <end position="131"/>
    </location>
</feature>
<feature type="sequence conflict" description="In Ref. 1; AAB18151." evidence="4" ref="1">
    <original>EE</original>
    <variation>QK</variation>
    <location>
        <begin position="181"/>
        <end position="182"/>
    </location>
</feature>
<feature type="sequence conflict" description="In Ref. 1; AAB18151." evidence="4" ref="1">
    <original>R</original>
    <variation>P</variation>
    <location>
        <position position="190"/>
    </location>
</feature>
<feature type="sequence conflict" description="In Ref. 1; AAB18151." evidence="4" ref="1">
    <original>S</original>
    <variation>A</variation>
    <location>
        <position position="208"/>
    </location>
</feature>
<feature type="sequence conflict" description="In Ref. 1; AAB18151." evidence="4" ref="1">
    <original>Q</original>
    <variation>H</variation>
    <location>
        <position position="224"/>
    </location>
</feature>
<feature type="sequence conflict" description="In Ref. 1; AAB18151." evidence="4" ref="1">
    <original>N</original>
    <variation>S</variation>
    <location>
        <position position="235"/>
    </location>
</feature>
<feature type="sequence conflict" description="In Ref. 1; AAB18151." evidence="4" ref="1">
    <original>V</original>
    <variation>A</variation>
    <location>
        <position position="270"/>
    </location>
</feature>
<keyword id="KW-0963">Cytoplasm</keyword>
<keyword id="KW-0274">FAD</keyword>
<keyword id="KW-0285">Flavoprotein</keyword>
<keyword id="KW-0520">NAD</keyword>
<keyword id="KW-0560">Oxidoreductase</keyword>
<protein>
    <recommendedName>
        <fullName evidence="4">Ferric vulnibactin reductase VuuB</fullName>
        <ecNumber evidence="1">1.16.1.7</ecNumber>
    </recommendedName>
    <alternativeName>
        <fullName evidence="4">Ferric chelate reductase</fullName>
        <shortName evidence="4">FCR</shortName>
    </alternativeName>
    <alternativeName>
        <fullName evidence="4">Ferric reductase</fullName>
    </alternativeName>
    <alternativeName>
        <fullName evidence="4">Ferric-vulnibactin utilization protein</fullName>
    </alternativeName>
    <alternativeName>
        <fullName evidence="4">Vulnibactin utilization protein B</fullName>
    </alternativeName>
</protein>
<sequence length="271" mass="30293">MSDSPERVYPMLLDFVRKETISKNLLRVTLTGEDLIGFPEDQNGSHIKVFFPNQASGILQLPVREGDNVIWPEHKPVPRAYSVRQYRAAVNELDIDFVTHGEETPGGGWALKADIGSQIGLIGPAGPDPLIEPADWHIIAGDLSAVPAISAILEKLPSDAKGYVFIEVDEIEDIHDLVHPEEMAINWLMRNPHDAEPALAKAIKQLPSPEKATSLSAFIAGENQSVINCRKILRNDYQIARDKLYAIPYWKRGKTEEAYHDERHDVMDAVY</sequence>
<evidence type="ECO:0000250" key="1">
    <source>
        <dbReference type="UniProtKB" id="V5XKC3"/>
    </source>
</evidence>
<evidence type="ECO:0000255" key="2">
    <source>
        <dbReference type="PROSITE-ProRule" id="PRU00716"/>
    </source>
</evidence>
<evidence type="ECO:0000303" key="3">
    <source>
    </source>
</evidence>
<evidence type="ECO:0000305" key="4"/>
<evidence type="ECO:0000312" key="5">
    <source>
        <dbReference type="EMBL" id="AAO07760.1"/>
    </source>
</evidence>
<organism>
    <name type="scientific">Vibrio vulnificus (strain CMCP6)</name>
    <dbReference type="NCBI Taxonomy" id="216895"/>
    <lineage>
        <taxon>Bacteria</taxon>
        <taxon>Pseudomonadati</taxon>
        <taxon>Pseudomonadota</taxon>
        <taxon>Gammaproteobacteria</taxon>
        <taxon>Vibrionales</taxon>
        <taxon>Vibrionaceae</taxon>
        <taxon>Vibrio</taxon>
    </lineage>
</organism>